<sequence>MVSHIAASVLTKYLGDYVDDLNKDNIKLSFLSGEAVLQDLKIKKTVLQSFLPNVIVKQAIIKKLSLHVPWKDLKGKPAIIKIEGIYVLAETSVEFDEQYYKKKFQDEKQAKLHIQEVLRLNKQQLKNPHQSTTTTTTTSDESNTFGSKLLQTVVDNLQLYIDSVHIRFEDSVNRRSFSFGVTLNSLVAESTDQTWNPTFIKNESTIIHKLINLNQLSIYWNSNSPKLKYTNIDDLSQKLKSMIKKEDSGKQQQQQQQQQGEEQDDEIEEDYFLSTESRKQQYIIDPISAKLKVVINKSIIPSEVIPKYNLNFEFDKTDISLSDYQYKDITGILESFKLFEKSIEFRSARPINTTIKQSPRKWWNYAIQCVLQKVHQKRYTQSWSYIKEFLSDKRDYIELFKKLKKKTIHQTEQTRLDSLEWKLPFDQILFFRNLSFKIIEKEEKLEKERLKLQQQQQQQQQNLNKISPTTTTTPSTSTGGGGWLSSWWKPIVNTSVPITAATTTTTATNTDSTITKLKDIKLSKDDWNEIYDTIGYDENDDIINSNVASLQQPKQFGKDFSNIIKTVINFRLVQGGLKLKKKRRTIALLQLNDISLSLKSKINSSFVFNGNLKGLELIDQSTFNTQFPKLISPLLKRNSSSIPTKIISQPPIFNITLESHSLSSTITSSTTTATTTQSTSTNSNNNNNIKVNYSLSIQSKPLTIVYYPKFISTVNDFFFKKEDDQDVQDMVLEDLEKKAQETIESIKAQTRDKLLLAISNKTTFSIDMDLEAPIILVPESITNKNTNLLILDLGKLLINHYPKQQQLQQQLQQLQQEQGQEQEQEQKQEQKQEQEQKDWKEEFYDEYLFKLINTQVLLANLKNDWRDIEQVKKFRMNIANPLNANFTLKISKLNNRQLLTSLKLMASIDLLEFYLSSCQYVNLVNIIQSVTQPIDQQQQLIGSESMYMSAFDYSSVYQSNIFKQPQQLQPQQKQQSPPLISSPPLIKKKKSYSKEFIDSYKMFEASFNIDKFNIHLRLDNYDSSGSSSNNDSSNTTTTNHNQLVSHNVALVYLRCLHGTYVQKLFDTNLELLIKGMWIEDCFQKPQSIAHGSGGDYLATTTNRFKPNDVNIGGGSNENLIKFKIQQISSDSPFYNNIDKLLDIELSQINLILNRKTVAGLIEFSNSVSNLSILKNNQNNNQNNNQNNNQNINESSPTVFITSPPPPPPPPLNHQSNNNSQYDTLSSSTYLIRNSNNKILPPIQQISTTANNNIKIQTKATIKIDLVRILLTRENNNPLIKASFTGFNCTTDQYNYKTIMNGKLGSLKIYDMTTEGRNYRTILTTRERKLNNKTSPTTPSSSGVSTGTTFDIDIDNFDTVSSSSSSSLLSSSSLLISPPGGEQSSLVYFQFESRNDNNSQMLKINLSSIRFIFLKRFTEELRLFLNNVNMMREYLKSSIYSAATVISQNRSTLFYEIEIQNPYIVIPLSSLSNKIFIVDLGKINIKNQFEKIIPTSTGEIDMILMEPVIIENIIIEAQNIKLLSGLNSEIKKSENNNNNNNNSNTNQRSYGTMVSDVNVSINLKTPLFSELNLKQYLEQCMKLQSWEKHFTISQFELNVSEYELKSLIELLDGNLSEFSSEILNDANSSFDQQKQQEIEKLKLQQEIEDNNNDNEDEQVNKLLQLIKEQVGYTYCKLGKFSIMFMKRDGTDIDDRLVLFYVSEAKMDIIKEEMETSMNIEIKSVQMKDFSKETHPHLRNILTPLSLKSVNEKRQQKEQILPQIIIKGSIKPPPIQQSLFQISIDGMFMIFVPHSWIPVQDSIMKLSKFATEAWNRYTIKVYGEAPTNDEIIQSGLSLFSLSIKDIKISIPGDCTVNSGQGENEYSLFIRSSLDIQTTSRGAMGVETITLIDANNIQIYRNQLVDTNNENINNNNNNNLTTSTTTTTTTNKNQSNIKIIAPFKIVFQTTSTLLNSESSLSINNIVVTFSYQDFKLMMKIINSIIESNNQNLIQEKMKRNYLKKYRDPNECTSDDELEEQLQQLENDDYNDDNYNSNGNNNNNNSNNQLPVKEDSQLQKYLSISLEKGEFILNDDHKISSPIKLLSIGVDGLKSNIFSFPQKNQIALSLDANMKAGYFNKNIGIWEPLIENWGFSFTSNNSIEGGWMVNFNSKIPLYINITKIFIDTSISTYQIWADDYYSQQKKDKKNKSNDYDNDEIIEDTVEQVNNDLIKPADDQKNNNNNKNDNNNNNNNNNNNNNNNNNNNNNNNNNNNNNNNNNNNNNNNNNNKNNNDNNNNIKNNNNNENNNNKNLQEKEEIKYPYYIRNDTGVELWYWVRSDEIQKLPVGKEAGFNPKFSSSSSSSQQQQQQPLSPLLQTQQQIQLKPEELQQKIELERKISFQLFGDFQPIAKVPMDSIGTYTLYPMPEYKNIKLLYEISYRNGAKVLSLHSNFNIRNDTDIPVVVHITAIYNQIPRSIEILLNPHVKIPIPVEYTIGRIKYKPYNLGYDYSAERIDCSNVLQLFKSSKQKQKQLNNQLQQQSNNNNNNNNNNNNTNSNNSNLLGNLIGGNNNNNDLNIGKISSKMICKHGVKLPFVFLSSIEKNSLETKNTIEISINTAIMIENVLACDLQYRLYHGKNKKIIGSAFFSGVIPMGKKLPVLVYDSLQDIYMEFQIYDFQWSPLCLIDSMVGLAVTDKVKIEDRLHQPLLISFDNRIQPNGSRFVTLYCEYWLINQTGLPLYFRHHIGAQTIDPAGQTPTKQIETIHESTSMKPTDSRNWYTKEWNHPSQPFMFAYSDNSIVGGKFSLKIYDSNWSSPFSLISSQSSSNSNIEISEDRTDEEKEIKNVIGTITKRQPLKTNYNLSVSILPSNSKFWRTKVVTFSPMYLMVNSTRFRILYQQFDCDSNTQSIIQDQSLPFQFPSSRHEKLIRIGILDTSAISNNPYNANDVSNIKWSGYFNPQILGQVVLRLRNETDNSSGGVLNKFKKDSEISTKKRNSNFISNLLTIKNKQLNVDSSNQQQQQLQQQQQQQQQQQQQQQQQQQQQQQQQQSINQQTSLNSSSSSTITSTNSTVIFEDLRVFINVTIRVKSSKSLTTTMIILNEQNPELPPYRINNKTRFPLWIRQKKTEIWDKVQPKTSIPYAWDHPILPKKLIIEFPTGLTKTYRLGNLEENSIVSIKNPNSSGGYDRVDFQISIIANGPTRVLNIKERDLNGDTNNNTISPQLNSIETFGITNDPNNPNNPNNNPNNNDKLNVKYEFSIDLSNIGISIINKIPTREEIVYLSIDGLKLEVKQSKLDQYIQFKVDDLQIDDQRYSTNFPVFLCQSKKINHSINQQPNQQSSSPQSTNTTTTTTTNTTTTNNTTQQQKLKPFLQFSATRTLKYSNIMFFRYFSILIQEFDINLDEASILNALSFININLNSLNEHFTLHPTITQEEILETKNASNIENHMVYFEMLHINPVKMNLSFISCKSPKETQAILGARSLAELLIGFKSNSPFLNIERAPIKFNGFIWEHPFLSTRQVIDEISLHFSYQMMSQAHKIFGSFDFIGNPIRLAESLGSGFKDFFHEPALGLVKSPQDFAAGLSKGTSSLINNSVFGFADSTSKITGTISKGLVQLSLDDSYIKERQESNKQKPKGVKEGLEFGFRDFGEGVIKGITGIIDEPYKGATQEKSWEGFFKGIGKGVLGVAVKPTVGVFDLVSKTSEGIKNSTTVAKSLSQIKRRRIPRYFPREGTLSTYNQFKSIGSFILYSKIGPPPTHDWYVFHTILNYKDLILIGSNYHLLLIRCANLSINGNLSDSEIIWKVKFSEIIQIKNIPSNFGFQLFVNVNGVGQPPITLLIPTLTEEVRNSVVRKITDLILLEKRFGNNLD</sequence>
<protein>
    <recommendedName>
        <fullName evidence="2">Intermembrane lipid transfer protein tipC</fullName>
    </recommendedName>
    <alternativeName>
        <fullName evidence="7">Developmental gene 1038 protein</fullName>
    </alternativeName>
    <alternativeName>
        <fullName evidence="7">Putative vacuolar protein sorting-associated protein 13C</fullName>
    </alternativeName>
</protein>
<organism>
    <name type="scientific">Dictyostelium discoideum</name>
    <name type="common">Social amoeba</name>
    <dbReference type="NCBI Taxonomy" id="44689"/>
    <lineage>
        <taxon>Eukaryota</taxon>
        <taxon>Amoebozoa</taxon>
        <taxon>Evosea</taxon>
        <taxon>Eumycetozoa</taxon>
        <taxon>Dictyostelia</taxon>
        <taxon>Dictyosteliales</taxon>
        <taxon>Dictyosteliaceae</taxon>
        <taxon>Dictyostelium</taxon>
    </lineage>
</organism>
<gene>
    <name type="primary">tipC</name>
    <name type="synonym">DG1038</name>
    <name type="synonym">vps13</name>
    <name type="synonym">vps13C</name>
    <name type="ORF">DDB_G0267422</name>
</gene>
<reference key="1">
    <citation type="journal article" date="1999" name="Dev. Genet.">
        <title>tip genes act in parallel pathways of early Dictyostelium development.</title>
        <authorList>
            <person name="Stege J.T."/>
            <person name="Laub M.T."/>
            <person name="Loomis W.F."/>
        </authorList>
    </citation>
    <scope>NUCLEOTIDE SEQUENCE [GENOMIC DNA]</scope>
    <scope>DISRUPTION PHENOTYPE</scope>
    <source>
        <strain>AX4</strain>
    </source>
</reference>
<reference key="2">
    <citation type="journal article" date="2005" name="Nature">
        <title>The genome of the social amoeba Dictyostelium discoideum.</title>
        <authorList>
            <person name="Eichinger L."/>
            <person name="Pachebat J.A."/>
            <person name="Gloeckner G."/>
            <person name="Rajandream M.A."/>
            <person name="Sucgang R."/>
            <person name="Berriman M."/>
            <person name="Song J."/>
            <person name="Olsen R."/>
            <person name="Szafranski K."/>
            <person name="Xu Q."/>
            <person name="Tunggal B."/>
            <person name="Kummerfeld S."/>
            <person name="Madera M."/>
            <person name="Konfortov B.A."/>
            <person name="Rivero F."/>
            <person name="Bankier A.T."/>
            <person name="Lehmann R."/>
            <person name="Hamlin N."/>
            <person name="Davies R."/>
            <person name="Gaudet P."/>
            <person name="Fey P."/>
            <person name="Pilcher K."/>
            <person name="Chen G."/>
            <person name="Saunders D."/>
            <person name="Sodergren E.J."/>
            <person name="Davis P."/>
            <person name="Kerhornou A."/>
            <person name="Nie X."/>
            <person name="Hall N."/>
            <person name="Anjard C."/>
            <person name="Hemphill L."/>
            <person name="Bason N."/>
            <person name="Farbrother P."/>
            <person name="Desany B."/>
            <person name="Just E."/>
            <person name="Morio T."/>
            <person name="Rost R."/>
            <person name="Churcher C.M."/>
            <person name="Cooper J."/>
            <person name="Haydock S."/>
            <person name="van Driessche N."/>
            <person name="Cronin A."/>
            <person name="Goodhead I."/>
            <person name="Muzny D.M."/>
            <person name="Mourier T."/>
            <person name="Pain A."/>
            <person name="Lu M."/>
            <person name="Harper D."/>
            <person name="Lindsay R."/>
            <person name="Hauser H."/>
            <person name="James K.D."/>
            <person name="Quiles M."/>
            <person name="Madan Babu M."/>
            <person name="Saito T."/>
            <person name="Buchrieser C."/>
            <person name="Wardroper A."/>
            <person name="Felder M."/>
            <person name="Thangavelu M."/>
            <person name="Johnson D."/>
            <person name="Knights A."/>
            <person name="Loulseged H."/>
            <person name="Mungall K.L."/>
            <person name="Oliver K."/>
            <person name="Price C."/>
            <person name="Quail M.A."/>
            <person name="Urushihara H."/>
            <person name="Hernandez J."/>
            <person name="Rabbinowitsch E."/>
            <person name="Steffen D."/>
            <person name="Sanders M."/>
            <person name="Ma J."/>
            <person name="Kohara Y."/>
            <person name="Sharp S."/>
            <person name="Simmonds M.N."/>
            <person name="Spiegler S."/>
            <person name="Tivey A."/>
            <person name="Sugano S."/>
            <person name="White B."/>
            <person name="Walker D."/>
            <person name="Woodward J.R."/>
            <person name="Winckler T."/>
            <person name="Tanaka Y."/>
            <person name="Shaulsky G."/>
            <person name="Schleicher M."/>
            <person name="Weinstock G.M."/>
            <person name="Rosenthal A."/>
            <person name="Cox E.C."/>
            <person name="Chisholm R.L."/>
            <person name="Gibbs R.A."/>
            <person name="Loomis W.F."/>
            <person name="Platzer M."/>
            <person name="Kay R.R."/>
            <person name="Williams J.G."/>
            <person name="Dear P.H."/>
            <person name="Noegel A.A."/>
            <person name="Barrell B.G."/>
            <person name="Kuspa A."/>
        </authorList>
    </citation>
    <scope>NUCLEOTIDE SEQUENCE [LARGE SCALE GENOMIC DNA]</scope>
    <source>
        <strain>AX4</strain>
    </source>
</reference>
<reference key="3">
    <citation type="journal article" date="2007" name="Genome Biol.">
        <title>High-throughput analysis of spatio-temporal dynamics in Dictyostelium.</title>
        <authorList>
            <person name="Sawai S."/>
            <person name="Guan X.-J."/>
            <person name="Kuspa A."/>
            <person name="Cox E.C."/>
        </authorList>
    </citation>
    <scope>DISRUPTION PHENOTYPE</scope>
</reference>
<proteinExistence type="inferred from homology"/>
<accession>Q55FG3</accession>
<accession>O76737</accession>
<feature type="chain" id="PRO_0000365725" description="Intermembrane lipid transfer protein tipC">
    <location>
        <begin position="1"/>
        <end position="3848"/>
    </location>
</feature>
<feature type="domain" description="Chorein N-terminal" evidence="3">
    <location>
        <begin position="4"/>
        <end position="112"/>
    </location>
</feature>
<feature type="region of interest" description="Disordered" evidence="4">
    <location>
        <begin position="243"/>
        <end position="268"/>
    </location>
</feature>
<feature type="region of interest" description="Disordered" evidence="4">
    <location>
        <begin position="450"/>
        <end position="481"/>
    </location>
</feature>
<feature type="region of interest" description="Disordered" evidence="4">
    <location>
        <begin position="966"/>
        <end position="985"/>
    </location>
</feature>
<feature type="region of interest" description="Disordered" evidence="4">
    <location>
        <begin position="1174"/>
        <end position="1219"/>
    </location>
</feature>
<feature type="region of interest" description="Disordered" evidence="4">
    <location>
        <begin position="1326"/>
        <end position="1345"/>
    </location>
</feature>
<feature type="region of interest" description="Disordered" evidence="4">
    <location>
        <begin position="1907"/>
        <end position="1926"/>
    </location>
</feature>
<feature type="region of interest" description="Disordered" evidence="4">
    <location>
        <begin position="2024"/>
        <end position="2047"/>
    </location>
</feature>
<feature type="region of interest" description="Disordered" evidence="4">
    <location>
        <begin position="2209"/>
        <end position="2290"/>
    </location>
</feature>
<feature type="region of interest" description="Disordered" evidence="4">
    <location>
        <begin position="2330"/>
        <end position="2353"/>
    </location>
</feature>
<feature type="region of interest" description="Disordered" evidence="4">
    <location>
        <begin position="2509"/>
        <end position="2541"/>
    </location>
</feature>
<feature type="region of interest" description="Disordered" evidence="4">
    <location>
        <begin position="3209"/>
        <end position="3228"/>
    </location>
</feature>
<feature type="region of interest" description="Disordered" evidence="4">
    <location>
        <begin position="3310"/>
        <end position="3342"/>
    </location>
</feature>
<feature type="compositionally biased region" description="Low complexity" evidence="4">
    <location>
        <begin position="251"/>
        <end position="260"/>
    </location>
</feature>
<feature type="compositionally biased region" description="Low complexity" evidence="4">
    <location>
        <begin position="452"/>
        <end position="477"/>
    </location>
</feature>
<feature type="compositionally biased region" description="Low complexity" evidence="4">
    <location>
        <begin position="1175"/>
        <end position="1190"/>
    </location>
</feature>
<feature type="compositionally biased region" description="Polar residues" evidence="4">
    <location>
        <begin position="1191"/>
        <end position="1200"/>
    </location>
</feature>
<feature type="compositionally biased region" description="Pro residues" evidence="4">
    <location>
        <begin position="1202"/>
        <end position="1211"/>
    </location>
</feature>
<feature type="compositionally biased region" description="Low complexity" evidence="4">
    <location>
        <begin position="1333"/>
        <end position="1345"/>
    </location>
</feature>
<feature type="compositionally biased region" description="Low complexity" evidence="4">
    <location>
        <begin position="2029"/>
        <end position="2044"/>
    </location>
</feature>
<feature type="compositionally biased region" description="Low complexity" evidence="4">
    <location>
        <begin position="2217"/>
        <end position="2289"/>
    </location>
</feature>
<feature type="compositionally biased region" description="Low complexity" evidence="4">
    <location>
        <begin position="2335"/>
        <end position="2353"/>
    </location>
</feature>
<feature type="compositionally biased region" description="Low complexity" evidence="4">
    <location>
        <begin position="3212"/>
        <end position="3228"/>
    </location>
</feature>
<feature type="compositionally biased region" description="Low complexity" evidence="4">
    <location>
        <begin position="3311"/>
        <end position="3342"/>
    </location>
</feature>
<feature type="sequence conflict" description="In Ref. 1; AAC31916." evidence="7" ref="1">
    <original>L</original>
    <variation>H</variation>
    <location>
        <position position="10"/>
    </location>
</feature>
<feature type="sequence conflict" description="In Ref. 1; AAC31916." evidence="7" ref="1">
    <original>S</original>
    <variation>P</variation>
    <location>
        <position position="1864"/>
    </location>
</feature>
<dbReference type="EMBL" id="AF079445">
    <property type="protein sequence ID" value="AAC31916.1"/>
    <property type="molecule type" value="Genomic_DNA"/>
</dbReference>
<dbReference type="EMBL" id="AAFI02000003">
    <property type="protein sequence ID" value="EAL73163.1"/>
    <property type="molecule type" value="Genomic_DNA"/>
</dbReference>
<dbReference type="RefSeq" id="XP_647570.1">
    <property type="nucleotide sequence ID" value="XM_642478.1"/>
</dbReference>
<dbReference type="SMR" id="Q55FG3"/>
<dbReference type="FunCoup" id="Q55FG3">
    <property type="interactions" value="13"/>
</dbReference>
<dbReference type="STRING" id="44689.Q55FG3"/>
<dbReference type="GlyGen" id="Q55FG3">
    <property type="glycosylation" value="1 site"/>
</dbReference>
<dbReference type="PaxDb" id="44689-DDB0191112"/>
<dbReference type="EnsemblProtists" id="EAL73163">
    <property type="protein sequence ID" value="EAL73163"/>
    <property type="gene ID" value="DDB_G0267422"/>
</dbReference>
<dbReference type="GeneID" id="8616380"/>
<dbReference type="KEGG" id="ddi:DDB_G0267422"/>
<dbReference type="dictyBase" id="DDB_G0267422">
    <property type="gene designation" value="tipC"/>
</dbReference>
<dbReference type="VEuPathDB" id="AmoebaDB:DDB_G0267422"/>
<dbReference type="eggNOG" id="KOG1809">
    <property type="taxonomic scope" value="Eukaryota"/>
</dbReference>
<dbReference type="HOGENOM" id="CLU_223857_0_0_1"/>
<dbReference type="InParanoid" id="Q55FG3"/>
<dbReference type="OMA" id="RHHIGAQ"/>
<dbReference type="PRO" id="PR:Q55FG3"/>
<dbReference type="Proteomes" id="UP000002195">
    <property type="component" value="Chromosome 1"/>
</dbReference>
<dbReference type="GO" id="GO:0016020">
    <property type="term" value="C:membrane"/>
    <property type="evidence" value="ECO:0007669"/>
    <property type="project" value="UniProtKB-SubCell"/>
</dbReference>
<dbReference type="GO" id="GO:0000045">
    <property type="term" value="P:autophagosome assembly"/>
    <property type="evidence" value="ECO:0000315"/>
    <property type="project" value="dictyBase"/>
</dbReference>
<dbReference type="GO" id="GO:0031154">
    <property type="term" value="P:culmination involved in sorocarp development"/>
    <property type="evidence" value="ECO:0000315"/>
    <property type="project" value="dictyBase"/>
</dbReference>
<dbReference type="GO" id="GO:0045324">
    <property type="term" value="P:late endosome to vacuole transport"/>
    <property type="evidence" value="ECO:0000250"/>
    <property type="project" value="dictyBase"/>
</dbReference>
<dbReference type="GO" id="GO:0006869">
    <property type="term" value="P:lipid transport"/>
    <property type="evidence" value="ECO:0007669"/>
    <property type="project" value="UniProtKB-KW"/>
</dbReference>
<dbReference type="GO" id="GO:0016236">
    <property type="term" value="P:macroautophagy"/>
    <property type="evidence" value="ECO:0000315"/>
    <property type="project" value="dictyBase"/>
</dbReference>
<dbReference type="GO" id="GO:0045053">
    <property type="term" value="P:protein retention in Golgi apparatus"/>
    <property type="evidence" value="ECO:0000318"/>
    <property type="project" value="GO_Central"/>
</dbReference>
<dbReference type="GO" id="GO:0006623">
    <property type="term" value="P:protein targeting to vacuole"/>
    <property type="evidence" value="ECO:0000318"/>
    <property type="project" value="GO_Central"/>
</dbReference>
<dbReference type="InterPro" id="IPR026847">
    <property type="entry name" value="VPS13"/>
</dbReference>
<dbReference type="InterPro" id="IPR056748">
    <property type="entry name" value="VPS13-like_C"/>
</dbReference>
<dbReference type="InterPro" id="IPR056747">
    <property type="entry name" value="VPS13-like_M"/>
</dbReference>
<dbReference type="InterPro" id="IPR026854">
    <property type="entry name" value="VPS13_N"/>
</dbReference>
<dbReference type="PANTHER" id="PTHR16166:SF113">
    <property type="entry name" value="INTERMEMBRANE LIPID TRANSFER PROTEIN TIPC"/>
    <property type="match status" value="1"/>
</dbReference>
<dbReference type="PANTHER" id="PTHR16166">
    <property type="entry name" value="VACUOLAR PROTEIN SORTING-ASSOCIATED PROTEIN VPS13"/>
    <property type="match status" value="1"/>
</dbReference>
<dbReference type="Pfam" id="PF25037">
    <property type="entry name" value="VPS13_C"/>
    <property type="match status" value="1"/>
</dbReference>
<dbReference type="Pfam" id="PF25033">
    <property type="entry name" value="VPS13_M"/>
    <property type="match status" value="1"/>
</dbReference>
<dbReference type="Pfam" id="PF12624">
    <property type="entry name" value="VPS13_N"/>
    <property type="match status" value="1"/>
</dbReference>
<dbReference type="SUPFAM" id="SSF81995">
    <property type="entry name" value="beta-sandwich domain of Sec23/24"/>
    <property type="match status" value="1"/>
</dbReference>
<comment type="function">
    <text evidence="1">Mediates the transfer of lipids between membranes at organelle contact sites.</text>
</comment>
<comment type="subcellular location">
    <subcellularLocation>
        <location evidence="7">Membrane</location>
        <topology evidence="7">Peripheral membrane protein</topology>
    </subcellularLocation>
</comment>
<comment type="disruption phenotype">
    <text evidence="5 6">Arrests development at mound stage, increases aggregate size and produdes multiple tips.</text>
</comment>
<comment type="similarity">
    <text evidence="7">Belongs to the VPS13 family.</text>
</comment>
<evidence type="ECO:0000250" key="1">
    <source>
        <dbReference type="UniProtKB" id="Q07878"/>
    </source>
</evidence>
<evidence type="ECO:0000250" key="2">
    <source>
        <dbReference type="UniProtKB" id="Q709C8"/>
    </source>
</evidence>
<evidence type="ECO:0000255" key="3"/>
<evidence type="ECO:0000256" key="4">
    <source>
        <dbReference type="SAM" id="MobiDB-lite"/>
    </source>
</evidence>
<evidence type="ECO:0000269" key="5">
    <source>
    </source>
</evidence>
<evidence type="ECO:0000269" key="6">
    <source>
    </source>
</evidence>
<evidence type="ECO:0000305" key="7"/>
<name>VP13C_DICDI</name>
<keyword id="KW-0445">Lipid transport</keyword>
<keyword id="KW-0472">Membrane</keyword>
<keyword id="KW-1185">Reference proteome</keyword>
<keyword id="KW-0813">Transport</keyword>